<comment type="subcellular location">
    <subcellularLocation>
        <location evidence="1">Cell inner membrane</location>
        <topology evidence="1">Multi-pass membrane protein</topology>
    </subcellularLocation>
</comment>
<comment type="similarity">
    <text evidence="1">Belongs to the UPF0761 family.</text>
</comment>
<sequence length="269" mass="30193">MISLKNFGLLFWKRFSENKLNQVAGALTYSTMLAIVPLVMVIFSIFSAFPVFNEVTGELKEMIFTNFAPSASDMVGEYIDQFVSNSKKMSAVGIVSLIAVALMLINNIDRTLNSIWHNSQSRSPLSSFAIYWMILTLGPLIIGVSIGISSYIKIMFEQSEHLSLGLKLLSFVPFLFTWFIFTLIYTVVPNKKVKIKHSAYGAFLAAIFFTLGKQAFTWYVVTFPSYQLIYGAMATLPIMLLWIQISWLVVLVGAQLASTLDEIGEQIEQ</sequence>
<proteinExistence type="inferred from homology"/>
<name>Y384_HAEI8</name>
<organism>
    <name type="scientific">Haemophilus influenzae (strain 86-028NP)</name>
    <dbReference type="NCBI Taxonomy" id="281310"/>
    <lineage>
        <taxon>Bacteria</taxon>
        <taxon>Pseudomonadati</taxon>
        <taxon>Pseudomonadota</taxon>
        <taxon>Gammaproteobacteria</taxon>
        <taxon>Pasteurellales</taxon>
        <taxon>Pasteurellaceae</taxon>
        <taxon>Haemophilus</taxon>
    </lineage>
</organism>
<accession>Q4QNR3</accession>
<reference key="1">
    <citation type="journal article" date="2005" name="J. Bacteriol.">
        <title>Genomic sequence of an otitis media isolate of nontypeable Haemophilus influenzae: comparative study with H. influenzae serotype d, strain KW20.</title>
        <authorList>
            <person name="Harrison A."/>
            <person name="Dyer D.W."/>
            <person name="Gillaspy A."/>
            <person name="Ray W.C."/>
            <person name="Mungur R."/>
            <person name="Carson M.B."/>
            <person name="Zhong H."/>
            <person name="Gipson J."/>
            <person name="Gipson M."/>
            <person name="Johnson L.S."/>
            <person name="Lewis L."/>
            <person name="Bakaletz L.O."/>
            <person name="Munson R.S. Jr."/>
        </authorList>
    </citation>
    <scope>NUCLEOTIDE SEQUENCE [LARGE SCALE GENOMIC DNA]</scope>
    <source>
        <strain>86-028NP</strain>
    </source>
</reference>
<dbReference type="EMBL" id="CP000057">
    <property type="protein sequence ID" value="AAX87334.1"/>
    <property type="molecule type" value="Genomic_DNA"/>
</dbReference>
<dbReference type="RefSeq" id="WP_005648916.1">
    <property type="nucleotide sequence ID" value="NC_007146.2"/>
</dbReference>
<dbReference type="GeneID" id="93219223"/>
<dbReference type="KEGG" id="hit:NTHI0384"/>
<dbReference type="HOGENOM" id="CLU_032288_0_0_6"/>
<dbReference type="Proteomes" id="UP000002525">
    <property type="component" value="Chromosome"/>
</dbReference>
<dbReference type="GO" id="GO:0005886">
    <property type="term" value="C:plasma membrane"/>
    <property type="evidence" value="ECO:0007669"/>
    <property type="project" value="UniProtKB-SubCell"/>
</dbReference>
<dbReference type="HAMAP" id="MF_00672">
    <property type="entry name" value="UPF0761"/>
    <property type="match status" value="1"/>
</dbReference>
<dbReference type="InterPro" id="IPR023679">
    <property type="entry name" value="UPF0761_bac"/>
</dbReference>
<dbReference type="InterPro" id="IPR017039">
    <property type="entry name" value="Virul_fac_BrkB"/>
</dbReference>
<dbReference type="NCBIfam" id="NF002457">
    <property type="entry name" value="PRK01637.1"/>
    <property type="match status" value="1"/>
</dbReference>
<dbReference type="NCBIfam" id="TIGR00765">
    <property type="entry name" value="yihY_not_rbn"/>
    <property type="match status" value="1"/>
</dbReference>
<dbReference type="PANTHER" id="PTHR30213">
    <property type="entry name" value="INNER MEMBRANE PROTEIN YHJD"/>
    <property type="match status" value="1"/>
</dbReference>
<dbReference type="PANTHER" id="PTHR30213:SF0">
    <property type="entry name" value="UPF0761 MEMBRANE PROTEIN YIHY"/>
    <property type="match status" value="1"/>
</dbReference>
<dbReference type="Pfam" id="PF03631">
    <property type="entry name" value="Virul_fac_BrkB"/>
    <property type="match status" value="1"/>
</dbReference>
<dbReference type="PIRSF" id="PIRSF035875">
    <property type="entry name" value="RNase_BN"/>
    <property type="match status" value="1"/>
</dbReference>
<evidence type="ECO:0000255" key="1">
    <source>
        <dbReference type="HAMAP-Rule" id="MF_00672"/>
    </source>
</evidence>
<feature type="chain" id="PRO_0000200985" description="UPF0761 membrane protein NTHI0384">
    <location>
        <begin position="1"/>
        <end position="269"/>
    </location>
</feature>
<feature type="transmembrane region" description="Helical" evidence="1">
    <location>
        <begin position="32"/>
        <end position="52"/>
    </location>
</feature>
<feature type="transmembrane region" description="Helical" evidence="1">
    <location>
        <begin position="89"/>
        <end position="109"/>
    </location>
</feature>
<feature type="transmembrane region" description="Helical" evidence="1">
    <location>
        <begin position="128"/>
        <end position="148"/>
    </location>
</feature>
<feature type="transmembrane region" description="Helical" evidence="1">
    <location>
        <begin position="168"/>
        <end position="188"/>
    </location>
</feature>
<feature type="transmembrane region" description="Helical" evidence="1">
    <location>
        <begin position="203"/>
        <end position="223"/>
    </location>
</feature>
<feature type="transmembrane region" description="Helical" evidence="1">
    <location>
        <begin position="232"/>
        <end position="252"/>
    </location>
</feature>
<protein>
    <recommendedName>
        <fullName evidence="1">UPF0761 membrane protein NTHI0384</fullName>
    </recommendedName>
</protein>
<gene>
    <name type="ordered locus">NTHI0384</name>
</gene>
<keyword id="KW-0997">Cell inner membrane</keyword>
<keyword id="KW-1003">Cell membrane</keyword>
<keyword id="KW-0472">Membrane</keyword>
<keyword id="KW-0812">Transmembrane</keyword>
<keyword id="KW-1133">Transmembrane helix</keyword>